<gene>
    <name evidence="1" type="primary">rpmC</name>
    <name evidence="1" type="synonym">rpl29</name>
    <name type="ordered locus">P9215_18211</name>
</gene>
<reference key="1">
    <citation type="journal article" date="2007" name="PLoS Genet.">
        <title>Patterns and implications of gene gain and loss in the evolution of Prochlorococcus.</title>
        <authorList>
            <person name="Kettler G.C."/>
            <person name="Martiny A.C."/>
            <person name="Huang K."/>
            <person name="Zucker J."/>
            <person name="Coleman M.L."/>
            <person name="Rodrigue S."/>
            <person name="Chen F."/>
            <person name="Lapidus A."/>
            <person name="Ferriera S."/>
            <person name="Johnson J."/>
            <person name="Steglich C."/>
            <person name="Church G.M."/>
            <person name="Richardson P."/>
            <person name="Chisholm S.W."/>
        </authorList>
    </citation>
    <scope>NUCLEOTIDE SEQUENCE [LARGE SCALE GENOMIC DNA]</scope>
    <source>
        <strain>MIT 9215</strain>
    </source>
</reference>
<dbReference type="EMBL" id="CP000825">
    <property type="protein sequence ID" value="ABV51434.1"/>
    <property type="molecule type" value="Genomic_DNA"/>
</dbReference>
<dbReference type="RefSeq" id="WP_012008440.1">
    <property type="nucleotide sequence ID" value="NC_009840.1"/>
</dbReference>
<dbReference type="SMR" id="A8G753"/>
<dbReference type="STRING" id="93060.P9215_18211"/>
<dbReference type="KEGG" id="pmh:P9215_18211"/>
<dbReference type="eggNOG" id="COG0255">
    <property type="taxonomic scope" value="Bacteria"/>
</dbReference>
<dbReference type="HOGENOM" id="CLU_158491_0_1_3"/>
<dbReference type="OrthoDB" id="9815192at2"/>
<dbReference type="Proteomes" id="UP000002014">
    <property type="component" value="Chromosome"/>
</dbReference>
<dbReference type="GO" id="GO:0022625">
    <property type="term" value="C:cytosolic large ribosomal subunit"/>
    <property type="evidence" value="ECO:0007669"/>
    <property type="project" value="TreeGrafter"/>
</dbReference>
<dbReference type="GO" id="GO:0003735">
    <property type="term" value="F:structural constituent of ribosome"/>
    <property type="evidence" value="ECO:0007669"/>
    <property type="project" value="InterPro"/>
</dbReference>
<dbReference type="GO" id="GO:0006412">
    <property type="term" value="P:translation"/>
    <property type="evidence" value="ECO:0007669"/>
    <property type="project" value="UniProtKB-UniRule"/>
</dbReference>
<dbReference type="Gene3D" id="1.10.287.310">
    <property type="match status" value="1"/>
</dbReference>
<dbReference type="HAMAP" id="MF_00374">
    <property type="entry name" value="Ribosomal_uL29"/>
    <property type="match status" value="1"/>
</dbReference>
<dbReference type="InterPro" id="IPR050063">
    <property type="entry name" value="Ribosomal_protein_uL29"/>
</dbReference>
<dbReference type="InterPro" id="IPR001854">
    <property type="entry name" value="Ribosomal_uL29"/>
</dbReference>
<dbReference type="InterPro" id="IPR036049">
    <property type="entry name" value="Ribosomal_uL29_sf"/>
</dbReference>
<dbReference type="NCBIfam" id="TIGR00012">
    <property type="entry name" value="L29"/>
    <property type="match status" value="1"/>
</dbReference>
<dbReference type="PANTHER" id="PTHR10916">
    <property type="entry name" value="60S RIBOSOMAL PROTEIN L35/50S RIBOSOMAL PROTEIN L29"/>
    <property type="match status" value="1"/>
</dbReference>
<dbReference type="PANTHER" id="PTHR10916:SF0">
    <property type="entry name" value="LARGE RIBOSOMAL SUBUNIT PROTEIN UL29C"/>
    <property type="match status" value="1"/>
</dbReference>
<dbReference type="Pfam" id="PF00831">
    <property type="entry name" value="Ribosomal_L29"/>
    <property type="match status" value="1"/>
</dbReference>
<dbReference type="SUPFAM" id="SSF46561">
    <property type="entry name" value="Ribosomal protein L29 (L29p)"/>
    <property type="match status" value="1"/>
</dbReference>
<proteinExistence type="inferred from homology"/>
<feature type="chain" id="PRO_1000059971" description="Large ribosomal subunit protein uL29">
    <location>
        <begin position="1"/>
        <end position="72"/>
    </location>
</feature>
<keyword id="KW-0687">Ribonucleoprotein</keyword>
<keyword id="KW-0689">Ribosomal protein</keyword>
<sequence length="72" mass="8428">MKNSESLKEFKKLNSDQITEKIDQLRKDLFDLRFKQATRQLNETHKFKIIKKQVAQLLTLSKSQSASQTTSD</sequence>
<name>RL29_PROM2</name>
<comment type="similarity">
    <text evidence="1">Belongs to the universal ribosomal protein uL29 family.</text>
</comment>
<accession>A8G753</accession>
<protein>
    <recommendedName>
        <fullName evidence="1">Large ribosomal subunit protein uL29</fullName>
    </recommendedName>
    <alternativeName>
        <fullName evidence="2">50S ribosomal protein L29</fullName>
    </alternativeName>
</protein>
<evidence type="ECO:0000255" key="1">
    <source>
        <dbReference type="HAMAP-Rule" id="MF_00374"/>
    </source>
</evidence>
<evidence type="ECO:0000305" key="2"/>
<organism>
    <name type="scientific">Prochlorococcus marinus (strain MIT 9215)</name>
    <dbReference type="NCBI Taxonomy" id="93060"/>
    <lineage>
        <taxon>Bacteria</taxon>
        <taxon>Bacillati</taxon>
        <taxon>Cyanobacteriota</taxon>
        <taxon>Cyanophyceae</taxon>
        <taxon>Synechococcales</taxon>
        <taxon>Prochlorococcaceae</taxon>
        <taxon>Prochlorococcus</taxon>
    </lineage>
</organism>